<organism>
    <name type="scientific">Shewanella amazonensis (strain ATCC BAA-1098 / SB2B)</name>
    <dbReference type="NCBI Taxonomy" id="326297"/>
    <lineage>
        <taxon>Bacteria</taxon>
        <taxon>Pseudomonadati</taxon>
        <taxon>Pseudomonadota</taxon>
        <taxon>Gammaproteobacteria</taxon>
        <taxon>Alteromonadales</taxon>
        <taxon>Shewanellaceae</taxon>
        <taxon>Shewanella</taxon>
    </lineage>
</organism>
<protein>
    <recommendedName>
        <fullName evidence="1">UPF0761 membrane protein Sama_3404</fullName>
    </recommendedName>
</protein>
<reference key="1">
    <citation type="submission" date="2006-12" db="EMBL/GenBank/DDBJ databases">
        <title>Complete sequence of Shewanella amazonensis SB2B.</title>
        <authorList>
            <consortium name="US DOE Joint Genome Institute"/>
            <person name="Copeland A."/>
            <person name="Lucas S."/>
            <person name="Lapidus A."/>
            <person name="Barry K."/>
            <person name="Detter J.C."/>
            <person name="Glavina del Rio T."/>
            <person name="Hammon N."/>
            <person name="Israni S."/>
            <person name="Dalin E."/>
            <person name="Tice H."/>
            <person name="Pitluck S."/>
            <person name="Munk A.C."/>
            <person name="Brettin T."/>
            <person name="Bruce D."/>
            <person name="Han C."/>
            <person name="Tapia R."/>
            <person name="Gilna P."/>
            <person name="Schmutz J."/>
            <person name="Larimer F."/>
            <person name="Land M."/>
            <person name="Hauser L."/>
            <person name="Kyrpides N."/>
            <person name="Mikhailova N."/>
            <person name="Fredrickson J."/>
            <person name="Richardson P."/>
        </authorList>
    </citation>
    <scope>NUCLEOTIDE SEQUENCE [LARGE SCALE GENOMIC DNA]</scope>
    <source>
        <strain>ATCC BAA-1098 / SB2B</strain>
    </source>
</reference>
<name>Y3404_SHEAM</name>
<keyword id="KW-0997">Cell inner membrane</keyword>
<keyword id="KW-1003">Cell membrane</keyword>
<keyword id="KW-0472">Membrane</keyword>
<keyword id="KW-1185">Reference proteome</keyword>
<keyword id="KW-0812">Transmembrane</keyword>
<keyword id="KW-1133">Transmembrane helix</keyword>
<evidence type="ECO:0000255" key="1">
    <source>
        <dbReference type="HAMAP-Rule" id="MF_00672"/>
    </source>
</evidence>
<evidence type="ECO:0000256" key="2">
    <source>
        <dbReference type="SAM" id="MobiDB-lite"/>
    </source>
</evidence>
<evidence type="ECO:0000305" key="3"/>
<sequence>MKNKIDVSLIQSFFLGVWRFVLHLVSRLKEDQINVRAGHLTYVTLLSLVPMVAVTMSVLSAFPVFQGIRGTIETFVYENMIPAAGDTVQTYINEFVKNASKGTAVGIGFLVVVAIMLISAIDKSLNAIWRTKEKRRFMVAFSMYWMVLTLGPVLMGASIAVTSYLVSLKVLSEADVYGVVPMLIEKLPLMFSVAAFLLLYMAVPNQKVKFLHALLGALVAALLFEAGKRGFALYVTTFPSYEAIYGTLATIPILFVWVYLSWTIVLFGGVIAAALPEYLDYDDGGDEDAQGCQDAPSGEALSSPKENPSSSSSTKPKTDNDPG</sequence>
<gene>
    <name type="ordered locus">Sama_3404</name>
</gene>
<feature type="chain" id="PRO_0000391055" description="UPF0761 membrane protein Sama_3404">
    <location>
        <begin position="1"/>
        <end position="323"/>
    </location>
</feature>
<feature type="transmembrane region" description="Helical" evidence="1">
    <location>
        <begin position="5"/>
        <end position="25"/>
    </location>
</feature>
<feature type="transmembrane region" description="Helical" evidence="1">
    <location>
        <begin position="45"/>
        <end position="65"/>
    </location>
</feature>
<feature type="transmembrane region" description="Helical" evidence="1">
    <location>
        <begin position="102"/>
        <end position="122"/>
    </location>
</feature>
<feature type="transmembrane region" description="Helical" evidence="1">
    <location>
        <begin position="137"/>
        <end position="157"/>
    </location>
</feature>
<feature type="transmembrane region" description="Helical" evidence="1">
    <location>
        <begin position="179"/>
        <end position="199"/>
    </location>
</feature>
<feature type="transmembrane region" description="Helical" evidence="1">
    <location>
        <begin position="207"/>
        <end position="227"/>
    </location>
</feature>
<feature type="transmembrane region" description="Helical" evidence="1">
    <location>
        <begin position="251"/>
        <end position="271"/>
    </location>
</feature>
<feature type="region of interest" description="Disordered" evidence="2">
    <location>
        <begin position="285"/>
        <end position="323"/>
    </location>
</feature>
<feature type="compositionally biased region" description="Low complexity" evidence="2">
    <location>
        <begin position="302"/>
        <end position="315"/>
    </location>
</feature>
<proteinExistence type="inferred from homology"/>
<accession>A1SB50</accession>
<comment type="subcellular location">
    <subcellularLocation>
        <location evidence="1">Cell inner membrane</location>
        <topology evidence="1">Multi-pass membrane protein</topology>
    </subcellularLocation>
</comment>
<comment type="similarity">
    <text evidence="1">Belongs to the UPF0761 family.</text>
</comment>
<comment type="sequence caution" evidence="3">
    <conflict type="erroneous initiation">
        <sequence resource="EMBL-CDS" id="ABM01607"/>
    </conflict>
</comment>
<dbReference type="EMBL" id="CP000507">
    <property type="protein sequence ID" value="ABM01607.1"/>
    <property type="status" value="ALT_INIT"/>
    <property type="molecule type" value="Genomic_DNA"/>
</dbReference>
<dbReference type="RefSeq" id="WP_041409949.1">
    <property type="nucleotide sequence ID" value="NC_008700.1"/>
</dbReference>
<dbReference type="STRING" id="326297.Sama_3404"/>
<dbReference type="KEGG" id="saz:Sama_3404"/>
<dbReference type="eggNOG" id="COG1295">
    <property type="taxonomic scope" value="Bacteria"/>
</dbReference>
<dbReference type="HOGENOM" id="CLU_032288_0_0_6"/>
<dbReference type="OrthoDB" id="9808671at2"/>
<dbReference type="Proteomes" id="UP000009175">
    <property type="component" value="Chromosome"/>
</dbReference>
<dbReference type="GO" id="GO:0005886">
    <property type="term" value="C:plasma membrane"/>
    <property type="evidence" value="ECO:0007669"/>
    <property type="project" value="UniProtKB-SubCell"/>
</dbReference>
<dbReference type="HAMAP" id="MF_00672">
    <property type="entry name" value="UPF0761"/>
    <property type="match status" value="1"/>
</dbReference>
<dbReference type="InterPro" id="IPR023679">
    <property type="entry name" value="UPF0761_bac"/>
</dbReference>
<dbReference type="InterPro" id="IPR017039">
    <property type="entry name" value="Virul_fac_BrkB"/>
</dbReference>
<dbReference type="NCBIfam" id="NF002457">
    <property type="entry name" value="PRK01637.1"/>
    <property type="match status" value="1"/>
</dbReference>
<dbReference type="NCBIfam" id="TIGR00765">
    <property type="entry name" value="yihY_not_rbn"/>
    <property type="match status" value="1"/>
</dbReference>
<dbReference type="PANTHER" id="PTHR30213">
    <property type="entry name" value="INNER MEMBRANE PROTEIN YHJD"/>
    <property type="match status" value="1"/>
</dbReference>
<dbReference type="PANTHER" id="PTHR30213:SF0">
    <property type="entry name" value="UPF0761 MEMBRANE PROTEIN YIHY"/>
    <property type="match status" value="1"/>
</dbReference>
<dbReference type="Pfam" id="PF03631">
    <property type="entry name" value="Virul_fac_BrkB"/>
    <property type="match status" value="1"/>
</dbReference>
<dbReference type="PIRSF" id="PIRSF035875">
    <property type="entry name" value="RNase_BN"/>
    <property type="match status" value="1"/>
</dbReference>